<reference key="1">
    <citation type="journal article" date="2005" name="Nat. Biotechnol.">
        <title>Complete genome sequence of the plant commensal Pseudomonas fluorescens Pf-5.</title>
        <authorList>
            <person name="Paulsen I.T."/>
            <person name="Press C.M."/>
            <person name="Ravel J."/>
            <person name="Kobayashi D.Y."/>
            <person name="Myers G.S.A."/>
            <person name="Mavrodi D.V."/>
            <person name="DeBoy R.T."/>
            <person name="Seshadri R."/>
            <person name="Ren Q."/>
            <person name="Madupu R."/>
            <person name="Dodson R.J."/>
            <person name="Durkin A.S."/>
            <person name="Brinkac L.M."/>
            <person name="Daugherty S.C."/>
            <person name="Sullivan S.A."/>
            <person name="Rosovitz M.J."/>
            <person name="Gwinn M.L."/>
            <person name="Zhou L."/>
            <person name="Schneider D.J."/>
            <person name="Cartinhour S.W."/>
            <person name="Nelson W.C."/>
            <person name="Weidman J."/>
            <person name="Watkins K."/>
            <person name="Tran K."/>
            <person name="Khouri H."/>
            <person name="Pierson E.A."/>
            <person name="Pierson L.S. III"/>
            <person name="Thomashow L.S."/>
            <person name="Loper J.E."/>
        </authorList>
    </citation>
    <scope>NUCLEOTIDE SEQUENCE [LARGE SCALE GENOMIC DNA]</scope>
    <source>
        <strain>ATCC BAA-477 / NRRL B-23932 / Pf-5</strain>
    </source>
</reference>
<proteinExistence type="inferred from homology"/>
<dbReference type="EMBL" id="CP000076">
    <property type="protein sequence ID" value="AAY94482.1"/>
    <property type="molecule type" value="Genomic_DNA"/>
</dbReference>
<dbReference type="RefSeq" id="WP_011063502.1">
    <property type="nucleotide sequence ID" value="NC_004129.6"/>
</dbReference>
<dbReference type="SMR" id="Q4K5Z3"/>
<dbReference type="STRING" id="220664.PFL_5268"/>
<dbReference type="KEGG" id="pfl:PFL_5268"/>
<dbReference type="PATRIC" id="fig|220664.5.peg.5380"/>
<dbReference type="eggNOG" id="COG1489">
    <property type="taxonomic scope" value="Bacteria"/>
</dbReference>
<dbReference type="HOGENOM" id="CLU_052299_2_0_6"/>
<dbReference type="Proteomes" id="UP000008540">
    <property type="component" value="Chromosome"/>
</dbReference>
<dbReference type="GO" id="GO:0003677">
    <property type="term" value="F:DNA binding"/>
    <property type="evidence" value="ECO:0007669"/>
    <property type="project" value="InterPro"/>
</dbReference>
<dbReference type="CDD" id="cd22359">
    <property type="entry name" value="SfsA-like_bacterial"/>
    <property type="match status" value="1"/>
</dbReference>
<dbReference type="FunFam" id="2.40.50.580:FF:000001">
    <property type="entry name" value="Sugar fermentation stimulation protein A"/>
    <property type="match status" value="1"/>
</dbReference>
<dbReference type="Gene3D" id="2.40.50.580">
    <property type="match status" value="1"/>
</dbReference>
<dbReference type="Gene3D" id="3.40.1350.60">
    <property type="match status" value="1"/>
</dbReference>
<dbReference type="HAMAP" id="MF_00095">
    <property type="entry name" value="SfsA"/>
    <property type="match status" value="1"/>
</dbReference>
<dbReference type="InterPro" id="IPR005224">
    <property type="entry name" value="SfsA"/>
</dbReference>
<dbReference type="InterPro" id="IPR040452">
    <property type="entry name" value="SfsA_C"/>
</dbReference>
<dbReference type="InterPro" id="IPR041465">
    <property type="entry name" value="SfsA_N"/>
</dbReference>
<dbReference type="NCBIfam" id="TIGR00230">
    <property type="entry name" value="sfsA"/>
    <property type="match status" value="1"/>
</dbReference>
<dbReference type="PANTHER" id="PTHR30545">
    <property type="entry name" value="SUGAR FERMENTATION STIMULATION PROTEIN A"/>
    <property type="match status" value="1"/>
</dbReference>
<dbReference type="PANTHER" id="PTHR30545:SF2">
    <property type="entry name" value="SUGAR FERMENTATION STIMULATION PROTEIN A"/>
    <property type="match status" value="1"/>
</dbReference>
<dbReference type="Pfam" id="PF03749">
    <property type="entry name" value="SfsA"/>
    <property type="match status" value="1"/>
</dbReference>
<dbReference type="Pfam" id="PF17746">
    <property type="entry name" value="SfsA_N"/>
    <property type="match status" value="1"/>
</dbReference>
<comment type="similarity">
    <text evidence="1">Belongs to the SfsA family.</text>
</comment>
<name>SFSA_PSEF5</name>
<feature type="chain" id="PRO_1000008011" description="Sugar fermentation stimulation protein homolog">
    <location>
        <begin position="1"/>
        <end position="237"/>
    </location>
</feature>
<gene>
    <name evidence="1" type="primary">sfsA</name>
    <name type="ordered locus">PFL_5268</name>
</gene>
<sequence length="237" mass="26024">MRFDPPLEEGRLLRRYKRFLADIETTTGELLTIHCPNTGSMLNCMVEGGQVWFSRSNDPKRKLPGTWEISETPQGRLACVNTGRANGLVEEALRAGLISELNGFTGLKREVPYGQENSRIDFRLDYPDGPAYVEVKSVTLGFDGTPVAAFPDAVTQRGAKHLRELASLAREGVRAVQLYCVNLSGIDAVRPAQEIDPGYAAALREARAAGVEVLAYGVCLTAEQVFIDRRLEVLLGD</sequence>
<evidence type="ECO:0000255" key="1">
    <source>
        <dbReference type="HAMAP-Rule" id="MF_00095"/>
    </source>
</evidence>
<protein>
    <recommendedName>
        <fullName evidence="1">Sugar fermentation stimulation protein homolog</fullName>
    </recommendedName>
</protein>
<accession>Q4K5Z3</accession>
<organism>
    <name type="scientific">Pseudomonas fluorescens (strain ATCC BAA-477 / NRRL B-23932 / Pf-5)</name>
    <dbReference type="NCBI Taxonomy" id="220664"/>
    <lineage>
        <taxon>Bacteria</taxon>
        <taxon>Pseudomonadati</taxon>
        <taxon>Pseudomonadota</taxon>
        <taxon>Gammaproteobacteria</taxon>
        <taxon>Pseudomonadales</taxon>
        <taxon>Pseudomonadaceae</taxon>
        <taxon>Pseudomonas</taxon>
    </lineage>
</organism>